<evidence type="ECO:0000250" key="1"/>
<evidence type="ECO:0000250" key="2">
    <source>
        <dbReference type="UniProtKB" id="P62277"/>
    </source>
</evidence>
<evidence type="ECO:0000305" key="3"/>
<feature type="initiator methionine" description="Removed" evidence="1">
    <location>
        <position position="1"/>
    </location>
</feature>
<feature type="chain" id="PRO_0000115672" description="Small ribosomal subunit protein uS15">
    <location>
        <begin position="2"/>
        <end position="151"/>
    </location>
</feature>
<comment type="function">
    <text evidence="2">Component of the small ribosomal subunit. The ribosome is a large ribonucleoprotein complex responsible for the synthesis of proteins in the cell. Part of the small subunit (SSU) processome, first precursor of the small eukaryotic ribosomal subunit. During the assembly of the SSU processome in the nucleolus, many ribosome biogenesis factors, an RNA chaperone and ribosomal proteins associate with the nascent pre-rRNA and work in concert to generate RNA folding, modifications, rearrangements and cleavage as well as targeted degradation of pre-ribosomal RNA by the RNA exosome.</text>
</comment>
<comment type="subunit">
    <text evidence="2">Component of the small ribosomal subunit. Part of the small subunit (SSU) processome, composed of more than 70 proteins and the RNA chaperone small nucleolar RNA (snoRNA) U3.</text>
</comment>
<comment type="subcellular location">
    <subcellularLocation>
        <location evidence="2">Cytoplasm</location>
    </subcellularLocation>
    <subcellularLocation>
        <location evidence="2">Nucleus</location>
        <location evidence="2">Nucleolus</location>
    </subcellularLocation>
</comment>
<comment type="similarity">
    <text evidence="3">Belongs to the universal ribosomal protein uS15 family.</text>
</comment>
<proteinExistence type="evidence at protein level"/>
<protein>
    <recommendedName>
        <fullName evidence="3">Small ribosomal subunit protein uS15</fullName>
    </recommendedName>
    <alternativeName>
        <fullName>40S ribosomal protein S13</fullName>
    </alternativeName>
</protein>
<gene>
    <name type="primary">rps-13</name>
    <name type="ORF">C16A3.9</name>
</gene>
<reference key="1">
    <citation type="journal article" date="1998" name="Science">
        <title>Genome sequence of the nematode C. elegans: a platform for investigating biology.</title>
        <authorList>
            <consortium name="The C. elegans sequencing consortium"/>
        </authorList>
    </citation>
    <scope>NUCLEOTIDE SEQUENCE [LARGE SCALE GENOMIC DNA]</scope>
    <source>
        <strain>Bristol N2</strain>
    </source>
</reference>
<accession>P51404</accession>
<sequence>MGRMHNPGKGMAKSAIPYRRSVPSWQKMTAEEVQDQIVKMAKKGLRPSQIGVILRDSHGVGQVRRLAGNKIFRILKSKGMAPELPEDLYHLVKKAVAIRKHLERSRKDIDSKYRLILVESRIHRLARYYKTKRQLPPTWKYESGTAASLVS</sequence>
<keyword id="KW-0002">3D-structure</keyword>
<keyword id="KW-0963">Cytoplasm</keyword>
<keyword id="KW-0539">Nucleus</keyword>
<keyword id="KW-1185">Reference proteome</keyword>
<keyword id="KW-0687">Ribonucleoprotein</keyword>
<keyword id="KW-0689">Ribosomal protein</keyword>
<dbReference type="EMBL" id="FO080367">
    <property type="protein sequence ID" value="CCD63229.1"/>
    <property type="molecule type" value="Genomic_DNA"/>
</dbReference>
<dbReference type="PIR" id="H88480">
    <property type="entry name" value="H88480"/>
</dbReference>
<dbReference type="RefSeq" id="NP_498393.1">
    <property type="nucleotide sequence ID" value="NM_065992.8"/>
</dbReference>
<dbReference type="PDB" id="9BH5">
    <property type="method" value="EM"/>
    <property type="resolution" value="2.63 A"/>
    <property type="chains" value="AN=1-151"/>
</dbReference>
<dbReference type="PDB" id="9CAI">
    <property type="method" value="EM"/>
    <property type="resolution" value="2.59 A"/>
    <property type="chains" value="AN=1-151"/>
</dbReference>
<dbReference type="PDBsum" id="9BH5"/>
<dbReference type="PDBsum" id="9CAI"/>
<dbReference type="EMDB" id="EMD-44533"/>
<dbReference type="EMDB" id="EMD-45392"/>
<dbReference type="SMR" id="P51404"/>
<dbReference type="BioGRID" id="41119">
    <property type="interactions" value="94"/>
</dbReference>
<dbReference type="DIP" id="DIP-25602N"/>
<dbReference type="FunCoup" id="P51404">
    <property type="interactions" value="1977"/>
</dbReference>
<dbReference type="IntAct" id="P51404">
    <property type="interactions" value="1"/>
</dbReference>
<dbReference type="STRING" id="6239.C16A3.9.1"/>
<dbReference type="PaxDb" id="6239-C16A3.9"/>
<dbReference type="PeptideAtlas" id="P51404"/>
<dbReference type="EnsemblMetazoa" id="C16A3.9.1">
    <property type="protein sequence ID" value="C16A3.9.1"/>
    <property type="gene ID" value="WBGene00004482"/>
</dbReference>
<dbReference type="GeneID" id="175901"/>
<dbReference type="KEGG" id="cel:CELE_C16A3.9"/>
<dbReference type="UCSC" id="C16A3.9.1">
    <property type="organism name" value="c. elegans"/>
</dbReference>
<dbReference type="AGR" id="WB:WBGene00004482"/>
<dbReference type="CTD" id="175901"/>
<dbReference type="WormBase" id="C16A3.9">
    <property type="protein sequence ID" value="CE04009"/>
    <property type="gene ID" value="WBGene00004482"/>
    <property type="gene designation" value="rps-13"/>
</dbReference>
<dbReference type="eggNOG" id="KOG0400">
    <property type="taxonomic scope" value="Eukaryota"/>
</dbReference>
<dbReference type="GeneTree" id="ENSGT00390000017491"/>
<dbReference type="HOGENOM" id="CLU_090139_1_0_1"/>
<dbReference type="InParanoid" id="P51404"/>
<dbReference type="OMA" id="MHTRRKG"/>
<dbReference type="OrthoDB" id="623277at2759"/>
<dbReference type="PhylomeDB" id="P51404"/>
<dbReference type="Reactome" id="R-CEL-156827">
    <property type="pathway name" value="L13a-mediated translational silencing of Ceruloplasmin expression"/>
</dbReference>
<dbReference type="Reactome" id="R-CEL-1799339">
    <property type="pathway name" value="SRP-dependent cotranslational protein targeting to membrane"/>
</dbReference>
<dbReference type="Reactome" id="R-CEL-72649">
    <property type="pathway name" value="Translation initiation complex formation"/>
</dbReference>
<dbReference type="Reactome" id="R-CEL-72689">
    <property type="pathway name" value="Formation of a pool of free 40S subunits"/>
</dbReference>
<dbReference type="Reactome" id="R-CEL-72695">
    <property type="pathway name" value="Formation of the ternary complex, and subsequently, the 43S complex"/>
</dbReference>
<dbReference type="Reactome" id="R-CEL-72702">
    <property type="pathway name" value="Ribosomal scanning and start codon recognition"/>
</dbReference>
<dbReference type="Reactome" id="R-CEL-72706">
    <property type="pathway name" value="GTP hydrolysis and joining of the 60S ribosomal subunit"/>
</dbReference>
<dbReference type="Reactome" id="R-CEL-975956">
    <property type="pathway name" value="Nonsense Mediated Decay (NMD) independent of the Exon Junction Complex (EJC)"/>
</dbReference>
<dbReference type="Reactome" id="R-CEL-975957">
    <property type="pathway name" value="Nonsense Mediated Decay (NMD) enhanced by the Exon Junction Complex (EJC)"/>
</dbReference>
<dbReference type="PRO" id="PR:P51404"/>
<dbReference type="Proteomes" id="UP000001940">
    <property type="component" value="Chromosome III"/>
</dbReference>
<dbReference type="Bgee" id="WBGene00004482">
    <property type="expression patterns" value="Expressed in larva and 3 other cell types or tissues"/>
</dbReference>
<dbReference type="GO" id="GO:0022627">
    <property type="term" value="C:cytosolic small ribosomal subunit"/>
    <property type="evidence" value="ECO:0000318"/>
    <property type="project" value="GO_Central"/>
</dbReference>
<dbReference type="GO" id="GO:0005730">
    <property type="term" value="C:nucleolus"/>
    <property type="evidence" value="ECO:0000318"/>
    <property type="project" value="GO_Central"/>
</dbReference>
<dbReference type="GO" id="GO:0032040">
    <property type="term" value="C:small-subunit processome"/>
    <property type="evidence" value="ECO:0000250"/>
    <property type="project" value="UniProtKB"/>
</dbReference>
<dbReference type="GO" id="GO:0070181">
    <property type="term" value="F:small ribosomal subunit rRNA binding"/>
    <property type="evidence" value="ECO:0000318"/>
    <property type="project" value="GO_Central"/>
</dbReference>
<dbReference type="GO" id="GO:0003735">
    <property type="term" value="F:structural constituent of ribosome"/>
    <property type="evidence" value="ECO:0000318"/>
    <property type="project" value="GO_Central"/>
</dbReference>
<dbReference type="GO" id="GO:0042274">
    <property type="term" value="P:ribosomal small subunit biogenesis"/>
    <property type="evidence" value="ECO:0000250"/>
    <property type="project" value="UniProtKB"/>
</dbReference>
<dbReference type="GO" id="GO:0006412">
    <property type="term" value="P:translation"/>
    <property type="evidence" value="ECO:0007669"/>
    <property type="project" value="InterPro"/>
</dbReference>
<dbReference type="CDD" id="cd00353">
    <property type="entry name" value="Ribosomal_S15p_S13e"/>
    <property type="match status" value="1"/>
</dbReference>
<dbReference type="FunFam" id="1.10.287.10:FF:000003">
    <property type="entry name" value="40S ribosomal protein S13"/>
    <property type="match status" value="1"/>
</dbReference>
<dbReference type="FunFam" id="4.10.860.130:FF:000001">
    <property type="entry name" value="40S ribosomal protein S13"/>
    <property type="match status" value="1"/>
</dbReference>
<dbReference type="Gene3D" id="4.10.860.130">
    <property type="match status" value="1"/>
</dbReference>
<dbReference type="Gene3D" id="1.10.287.10">
    <property type="entry name" value="S15/NS1, RNA-binding"/>
    <property type="match status" value="1"/>
</dbReference>
<dbReference type="HAMAP" id="MF_01343_A">
    <property type="entry name" value="Ribosomal_uS15_A"/>
    <property type="match status" value="1"/>
</dbReference>
<dbReference type="InterPro" id="IPR000589">
    <property type="entry name" value="Ribosomal_uS15"/>
</dbReference>
<dbReference type="InterPro" id="IPR023029">
    <property type="entry name" value="Ribosomal_uS15_arc_euk"/>
</dbReference>
<dbReference type="InterPro" id="IPR012606">
    <property type="entry name" value="Ribosomal_uS15_N"/>
</dbReference>
<dbReference type="InterPro" id="IPR009068">
    <property type="entry name" value="uS15_NS1_RNA-bd_sf"/>
</dbReference>
<dbReference type="NCBIfam" id="NF006331">
    <property type="entry name" value="PRK08561.1"/>
    <property type="match status" value="1"/>
</dbReference>
<dbReference type="PANTHER" id="PTHR11885">
    <property type="entry name" value="RIBOSOMAL PROTEIN S15P/S13E"/>
    <property type="match status" value="1"/>
</dbReference>
<dbReference type="PANTHER" id="PTHR11885:SF6">
    <property type="entry name" value="SMALL RIBOSOMAL SUBUNIT PROTEIN US15"/>
    <property type="match status" value="1"/>
</dbReference>
<dbReference type="Pfam" id="PF08069">
    <property type="entry name" value="Ribosomal_S13_N"/>
    <property type="match status" value="1"/>
</dbReference>
<dbReference type="Pfam" id="PF00312">
    <property type="entry name" value="Ribosomal_S15"/>
    <property type="match status" value="1"/>
</dbReference>
<dbReference type="SMART" id="SM01386">
    <property type="entry name" value="Ribosomal_S13_N"/>
    <property type="match status" value="1"/>
</dbReference>
<dbReference type="SMART" id="SM01387">
    <property type="entry name" value="Ribosomal_S15"/>
    <property type="match status" value="1"/>
</dbReference>
<dbReference type="SUPFAM" id="SSF47060">
    <property type="entry name" value="S15/NS1 RNA-binding domain"/>
    <property type="match status" value="1"/>
</dbReference>
<dbReference type="PROSITE" id="PS00362">
    <property type="entry name" value="RIBOSOMAL_S15"/>
    <property type="match status" value="1"/>
</dbReference>
<name>RS13_CAEEL</name>
<organism>
    <name type="scientific">Caenorhabditis elegans</name>
    <dbReference type="NCBI Taxonomy" id="6239"/>
    <lineage>
        <taxon>Eukaryota</taxon>
        <taxon>Metazoa</taxon>
        <taxon>Ecdysozoa</taxon>
        <taxon>Nematoda</taxon>
        <taxon>Chromadorea</taxon>
        <taxon>Rhabditida</taxon>
        <taxon>Rhabditina</taxon>
        <taxon>Rhabditomorpha</taxon>
        <taxon>Rhabditoidea</taxon>
        <taxon>Rhabditidae</taxon>
        <taxon>Peloderinae</taxon>
        <taxon>Caenorhabditis</taxon>
    </lineage>
</organism>